<organism>
    <name type="scientific">Mus musculus</name>
    <name type="common">Mouse</name>
    <dbReference type="NCBI Taxonomy" id="10090"/>
    <lineage>
        <taxon>Eukaryota</taxon>
        <taxon>Metazoa</taxon>
        <taxon>Chordata</taxon>
        <taxon>Craniata</taxon>
        <taxon>Vertebrata</taxon>
        <taxon>Euteleostomi</taxon>
        <taxon>Mammalia</taxon>
        <taxon>Eutheria</taxon>
        <taxon>Euarchontoglires</taxon>
        <taxon>Glires</taxon>
        <taxon>Rodentia</taxon>
        <taxon>Myomorpha</taxon>
        <taxon>Muroidea</taxon>
        <taxon>Muridae</taxon>
        <taxon>Murinae</taxon>
        <taxon>Mus</taxon>
        <taxon>Mus</taxon>
    </lineage>
</organism>
<keyword id="KW-0479">Metal-binding</keyword>
<keyword id="KW-1185">Reference proteome</keyword>
<keyword id="KW-0862">Zinc</keyword>
<keyword id="KW-0863">Zinc-finger</keyword>
<evidence type="ECO:0000255" key="1">
    <source>
        <dbReference type="PROSITE-ProRule" id="PRU00175"/>
    </source>
</evidence>
<accession>Q3UIW8</accession>
<sequence>MLQPEGLYALEEGTALTASRNDCIICYSAYDLSVHLPRRLYCGHTFCQACMQRLDMPAHEQHWIPCPQCRQSTPVPRGGVTMLDLDLAAFLAVKAEREPSKIEPRSSVPLKISTTITQQPAGLYPTLGPQPHFPQPGCCCWGWGRLCWYPPGNPEV</sequence>
<protein>
    <recommendedName>
        <fullName>RING finger protein 224</fullName>
    </recommendedName>
</protein>
<name>RN224_MOUSE</name>
<proteinExistence type="evidence at transcript level"/>
<gene>
    <name type="primary">Rnf224</name>
    <name type="synonym">Gm757</name>
</gene>
<feature type="chain" id="PRO_0000412183" description="RING finger protein 224">
    <location>
        <begin position="1"/>
        <end position="156"/>
    </location>
</feature>
<feature type="zinc finger region" description="RING-type" evidence="1">
    <location>
        <begin position="23"/>
        <end position="70"/>
    </location>
</feature>
<dbReference type="EMBL" id="AK146725">
    <property type="protein sequence ID" value="BAE27388.1"/>
    <property type="molecule type" value="mRNA"/>
</dbReference>
<dbReference type="EMBL" id="BC147425">
    <property type="protein sequence ID" value="AAI47426.1"/>
    <property type="molecule type" value="mRNA"/>
</dbReference>
<dbReference type="EMBL" id="BC147426">
    <property type="protein sequence ID" value="AAI47427.1"/>
    <property type="molecule type" value="mRNA"/>
</dbReference>
<dbReference type="RefSeq" id="NP_001028582.1">
    <property type="nucleotide sequence ID" value="NM_001033410.3"/>
</dbReference>
<dbReference type="SMR" id="Q3UIW8"/>
<dbReference type="FunCoup" id="Q3UIW8">
    <property type="interactions" value="1"/>
</dbReference>
<dbReference type="iPTMnet" id="Q3UIW8"/>
<dbReference type="PhosphoSitePlus" id="Q3UIW8"/>
<dbReference type="PaxDb" id="10090-ENSMUSP00000088868"/>
<dbReference type="Antibodypedia" id="69700">
    <property type="antibodies" value="52 antibodies from 11 providers"/>
</dbReference>
<dbReference type="Ensembl" id="ENSMUST00000091318.5">
    <property type="protein sequence ID" value="ENSMUSP00000145470.2"/>
    <property type="gene ID" value="ENSMUSG00000089953.4"/>
</dbReference>
<dbReference type="Ensembl" id="ENSMUST00000205192.2">
    <property type="protein sequence ID" value="ENSMUSP00000145127.2"/>
    <property type="gene ID" value="ENSMUSG00000089953.4"/>
</dbReference>
<dbReference type="GeneID" id="329360"/>
<dbReference type="KEGG" id="mmu:329360"/>
<dbReference type="UCSC" id="uc008iqu.1">
    <property type="organism name" value="mouse"/>
</dbReference>
<dbReference type="AGR" id="MGI:2685603"/>
<dbReference type="CTD" id="643596"/>
<dbReference type="MGI" id="MGI:2685603">
    <property type="gene designation" value="Rnf224"/>
</dbReference>
<dbReference type="VEuPathDB" id="HostDB:ENSMUSG00000089953"/>
<dbReference type="eggNOG" id="ENOG502S2Y1">
    <property type="taxonomic scope" value="Eukaryota"/>
</dbReference>
<dbReference type="GeneTree" id="ENSGT00510000050587"/>
<dbReference type="InParanoid" id="Q3UIW8"/>
<dbReference type="OMA" id="ANEQRWI"/>
<dbReference type="OrthoDB" id="252722at2759"/>
<dbReference type="PhylomeDB" id="Q3UIW8"/>
<dbReference type="TreeFam" id="TF331690"/>
<dbReference type="BioGRID-ORCS" id="329360">
    <property type="hits" value="1 hit in 47 CRISPR screens"/>
</dbReference>
<dbReference type="PRO" id="PR:Q3UIW8"/>
<dbReference type="Proteomes" id="UP000000589">
    <property type="component" value="Chromosome 2"/>
</dbReference>
<dbReference type="RNAct" id="Q3UIW8">
    <property type="molecule type" value="protein"/>
</dbReference>
<dbReference type="Bgee" id="ENSMUSG00000089953">
    <property type="expression patterns" value="Expressed in yolk sac and 11 other cell types or tissues"/>
</dbReference>
<dbReference type="GO" id="GO:0008270">
    <property type="term" value="F:zinc ion binding"/>
    <property type="evidence" value="ECO:0007669"/>
    <property type="project" value="UniProtKB-KW"/>
</dbReference>
<dbReference type="CDD" id="cd16565">
    <property type="entry name" value="RING-HC_RNF224"/>
    <property type="match status" value="1"/>
</dbReference>
<dbReference type="Gene3D" id="3.30.40.10">
    <property type="entry name" value="Zinc/RING finger domain, C3HC4 (zinc finger)"/>
    <property type="match status" value="1"/>
</dbReference>
<dbReference type="InterPro" id="IPR053122">
    <property type="entry name" value="RING_finger_domain"/>
</dbReference>
<dbReference type="InterPro" id="IPR027370">
    <property type="entry name" value="Znf-RING_euk"/>
</dbReference>
<dbReference type="InterPro" id="IPR001841">
    <property type="entry name" value="Znf_RING"/>
</dbReference>
<dbReference type="InterPro" id="IPR013083">
    <property type="entry name" value="Znf_RING/FYVE/PHD"/>
</dbReference>
<dbReference type="InterPro" id="IPR017907">
    <property type="entry name" value="Znf_RING_CS"/>
</dbReference>
<dbReference type="PANTHER" id="PTHR47454">
    <property type="entry name" value="RING FINGER PROTEIN 224"/>
    <property type="match status" value="1"/>
</dbReference>
<dbReference type="PANTHER" id="PTHR47454:SF1">
    <property type="entry name" value="RING FINGER PROTEIN 224"/>
    <property type="match status" value="1"/>
</dbReference>
<dbReference type="Pfam" id="PF13445">
    <property type="entry name" value="zf-RING_UBOX"/>
    <property type="match status" value="1"/>
</dbReference>
<dbReference type="SMART" id="SM00184">
    <property type="entry name" value="RING"/>
    <property type="match status" value="1"/>
</dbReference>
<dbReference type="SUPFAM" id="SSF57850">
    <property type="entry name" value="RING/U-box"/>
    <property type="match status" value="1"/>
</dbReference>
<dbReference type="PROSITE" id="PS00518">
    <property type="entry name" value="ZF_RING_1"/>
    <property type="match status" value="1"/>
</dbReference>
<dbReference type="PROSITE" id="PS50089">
    <property type="entry name" value="ZF_RING_2"/>
    <property type="match status" value="1"/>
</dbReference>
<reference key="1">
    <citation type="journal article" date="2005" name="Science">
        <title>The transcriptional landscape of the mammalian genome.</title>
        <authorList>
            <person name="Carninci P."/>
            <person name="Kasukawa T."/>
            <person name="Katayama S."/>
            <person name="Gough J."/>
            <person name="Frith M.C."/>
            <person name="Maeda N."/>
            <person name="Oyama R."/>
            <person name="Ravasi T."/>
            <person name="Lenhard B."/>
            <person name="Wells C."/>
            <person name="Kodzius R."/>
            <person name="Shimokawa K."/>
            <person name="Bajic V.B."/>
            <person name="Brenner S.E."/>
            <person name="Batalov S."/>
            <person name="Forrest A.R."/>
            <person name="Zavolan M."/>
            <person name="Davis M.J."/>
            <person name="Wilming L.G."/>
            <person name="Aidinis V."/>
            <person name="Allen J.E."/>
            <person name="Ambesi-Impiombato A."/>
            <person name="Apweiler R."/>
            <person name="Aturaliya R.N."/>
            <person name="Bailey T.L."/>
            <person name="Bansal M."/>
            <person name="Baxter L."/>
            <person name="Beisel K.W."/>
            <person name="Bersano T."/>
            <person name="Bono H."/>
            <person name="Chalk A.M."/>
            <person name="Chiu K.P."/>
            <person name="Choudhary V."/>
            <person name="Christoffels A."/>
            <person name="Clutterbuck D.R."/>
            <person name="Crowe M.L."/>
            <person name="Dalla E."/>
            <person name="Dalrymple B.P."/>
            <person name="de Bono B."/>
            <person name="Della Gatta G."/>
            <person name="di Bernardo D."/>
            <person name="Down T."/>
            <person name="Engstrom P."/>
            <person name="Fagiolini M."/>
            <person name="Faulkner G."/>
            <person name="Fletcher C.F."/>
            <person name="Fukushima T."/>
            <person name="Furuno M."/>
            <person name="Futaki S."/>
            <person name="Gariboldi M."/>
            <person name="Georgii-Hemming P."/>
            <person name="Gingeras T.R."/>
            <person name="Gojobori T."/>
            <person name="Green R.E."/>
            <person name="Gustincich S."/>
            <person name="Harbers M."/>
            <person name="Hayashi Y."/>
            <person name="Hensch T.K."/>
            <person name="Hirokawa N."/>
            <person name="Hill D."/>
            <person name="Huminiecki L."/>
            <person name="Iacono M."/>
            <person name="Ikeo K."/>
            <person name="Iwama A."/>
            <person name="Ishikawa T."/>
            <person name="Jakt M."/>
            <person name="Kanapin A."/>
            <person name="Katoh M."/>
            <person name="Kawasawa Y."/>
            <person name="Kelso J."/>
            <person name="Kitamura H."/>
            <person name="Kitano H."/>
            <person name="Kollias G."/>
            <person name="Krishnan S.P."/>
            <person name="Kruger A."/>
            <person name="Kummerfeld S.K."/>
            <person name="Kurochkin I.V."/>
            <person name="Lareau L.F."/>
            <person name="Lazarevic D."/>
            <person name="Lipovich L."/>
            <person name="Liu J."/>
            <person name="Liuni S."/>
            <person name="McWilliam S."/>
            <person name="Madan Babu M."/>
            <person name="Madera M."/>
            <person name="Marchionni L."/>
            <person name="Matsuda H."/>
            <person name="Matsuzawa S."/>
            <person name="Miki H."/>
            <person name="Mignone F."/>
            <person name="Miyake S."/>
            <person name="Morris K."/>
            <person name="Mottagui-Tabar S."/>
            <person name="Mulder N."/>
            <person name="Nakano N."/>
            <person name="Nakauchi H."/>
            <person name="Ng P."/>
            <person name="Nilsson R."/>
            <person name="Nishiguchi S."/>
            <person name="Nishikawa S."/>
            <person name="Nori F."/>
            <person name="Ohara O."/>
            <person name="Okazaki Y."/>
            <person name="Orlando V."/>
            <person name="Pang K.C."/>
            <person name="Pavan W.J."/>
            <person name="Pavesi G."/>
            <person name="Pesole G."/>
            <person name="Petrovsky N."/>
            <person name="Piazza S."/>
            <person name="Reed J."/>
            <person name="Reid J.F."/>
            <person name="Ring B.Z."/>
            <person name="Ringwald M."/>
            <person name="Rost B."/>
            <person name="Ruan Y."/>
            <person name="Salzberg S.L."/>
            <person name="Sandelin A."/>
            <person name="Schneider C."/>
            <person name="Schoenbach C."/>
            <person name="Sekiguchi K."/>
            <person name="Semple C.A."/>
            <person name="Seno S."/>
            <person name="Sessa L."/>
            <person name="Sheng Y."/>
            <person name="Shibata Y."/>
            <person name="Shimada H."/>
            <person name="Shimada K."/>
            <person name="Silva D."/>
            <person name="Sinclair B."/>
            <person name="Sperling S."/>
            <person name="Stupka E."/>
            <person name="Sugiura K."/>
            <person name="Sultana R."/>
            <person name="Takenaka Y."/>
            <person name="Taki K."/>
            <person name="Tammoja K."/>
            <person name="Tan S.L."/>
            <person name="Tang S."/>
            <person name="Taylor M.S."/>
            <person name="Tegner J."/>
            <person name="Teichmann S.A."/>
            <person name="Ueda H.R."/>
            <person name="van Nimwegen E."/>
            <person name="Verardo R."/>
            <person name="Wei C.L."/>
            <person name="Yagi K."/>
            <person name="Yamanishi H."/>
            <person name="Zabarovsky E."/>
            <person name="Zhu S."/>
            <person name="Zimmer A."/>
            <person name="Hide W."/>
            <person name="Bult C."/>
            <person name="Grimmond S.M."/>
            <person name="Teasdale R.D."/>
            <person name="Liu E.T."/>
            <person name="Brusic V."/>
            <person name="Quackenbush J."/>
            <person name="Wahlestedt C."/>
            <person name="Mattick J.S."/>
            <person name="Hume D.A."/>
            <person name="Kai C."/>
            <person name="Sasaki D."/>
            <person name="Tomaru Y."/>
            <person name="Fukuda S."/>
            <person name="Kanamori-Katayama M."/>
            <person name="Suzuki M."/>
            <person name="Aoki J."/>
            <person name="Arakawa T."/>
            <person name="Iida J."/>
            <person name="Imamura K."/>
            <person name="Itoh M."/>
            <person name="Kato T."/>
            <person name="Kawaji H."/>
            <person name="Kawagashira N."/>
            <person name="Kawashima T."/>
            <person name="Kojima M."/>
            <person name="Kondo S."/>
            <person name="Konno H."/>
            <person name="Nakano K."/>
            <person name="Ninomiya N."/>
            <person name="Nishio T."/>
            <person name="Okada M."/>
            <person name="Plessy C."/>
            <person name="Shibata K."/>
            <person name="Shiraki T."/>
            <person name="Suzuki S."/>
            <person name="Tagami M."/>
            <person name="Waki K."/>
            <person name="Watahiki A."/>
            <person name="Okamura-Oho Y."/>
            <person name="Suzuki H."/>
            <person name="Kawai J."/>
            <person name="Hayashizaki Y."/>
        </authorList>
    </citation>
    <scope>NUCLEOTIDE SEQUENCE [LARGE SCALE MRNA]</scope>
    <source>
        <strain>C57BL/6J</strain>
        <tissue>Amnion</tissue>
    </source>
</reference>
<reference key="2">
    <citation type="journal article" date="2004" name="Genome Res.">
        <title>The status, quality, and expansion of the NIH full-length cDNA project: the Mammalian Gene Collection (MGC).</title>
        <authorList>
            <consortium name="The MGC Project Team"/>
        </authorList>
    </citation>
    <scope>NUCLEOTIDE SEQUENCE [LARGE SCALE MRNA]</scope>
    <source>
        <tissue>Brain</tissue>
    </source>
</reference>